<dbReference type="EMBL" id="X15832">
    <property type="protein sequence ID" value="CAA33837.1"/>
    <property type="molecule type" value="Genomic_RNA"/>
</dbReference>
<dbReference type="PIR" id="A34300">
    <property type="entry name" value="VGIHIB"/>
</dbReference>
<dbReference type="SMR" id="P12722"/>
<dbReference type="GlyCosmos" id="P12722">
    <property type="glycosylation" value="30 sites, No reported glycans"/>
</dbReference>
<dbReference type="GO" id="GO:0044173">
    <property type="term" value="C:host cell endoplasmic reticulum-Golgi intermediate compartment membrane"/>
    <property type="evidence" value="ECO:0007669"/>
    <property type="project" value="UniProtKB-SubCell"/>
</dbReference>
<dbReference type="GO" id="GO:0016020">
    <property type="term" value="C:membrane"/>
    <property type="evidence" value="ECO:0007669"/>
    <property type="project" value="UniProtKB-KW"/>
</dbReference>
<dbReference type="GO" id="GO:0019031">
    <property type="term" value="C:viral envelope"/>
    <property type="evidence" value="ECO:0007669"/>
    <property type="project" value="UniProtKB-KW"/>
</dbReference>
<dbReference type="GO" id="GO:0055036">
    <property type="term" value="C:virion membrane"/>
    <property type="evidence" value="ECO:0007669"/>
    <property type="project" value="UniProtKB-SubCell"/>
</dbReference>
<dbReference type="GO" id="GO:0075509">
    <property type="term" value="P:endocytosis involved in viral entry into host cell"/>
    <property type="evidence" value="ECO:0007669"/>
    <property type="project" value="UniProtKB-KW"/>
</dbReference>
<dbReference type="GO" id="GO:0039654">
    <property type="term" value="P:fusion of virus membrane with host endosome membrane"/>
    <property type="evidence" value="ECO:0007669"/>
    <property type="project" value="UniProtKB-KW"/>
</dbReference>
<dbReference type="GO" id="GO:0019064">
    <property type="term" value="P:fusion of virus membrane with host plasma membrane"/>
    <property type="evidence" value="ECO:0007669"/>
    <property type="project" value="InterPro"/>
</dbReference>
<dbReference type="GO" id="GO:0046813">
    <property type="term" value="P:receptor-mediated virion attachment to host cell"/>
    <property type="evidence" value="ECO:0007669"/>
    <property type="project" value="InterPro"/>
</dbReference>
<dbReference type="CDD" id="cd22372">
    <property type="entry name" value="gammaCoV_Spike_SD1-2_S1-S2_S2"/>
    <property type="match status" value="1"/>
</dbReference>
<dbReference type="FunFam" id="1.20.5.300:FF:000003">
    <property type="entry name" value="Spike glycoprotein"/>
    <property type="match status" value="1"/>
</dbReference>
<dbReference type="Gene3D" id="1.20.5.300">
    <property type="match status" value="2"/>
</dbReference>
<dbReference type="HAMAP" id="MF_04098">
    <property type="entry name" value="GAMMA_CORONA_SPIKE"/>
    <property type="match status" value="1"/>
</dbReference>
<dbReference type="InterPro" id="IPR043607">
    <property type="entry name" value="CoV_S1_C"/>
</dbReference>
<dbReference type="InterPro" id="IPR043473">
    <property type="entry name" value="S2_sf_CoV"/>
</dbReference>
<dbReference type="InterPro" id="IPR002552">
    <property type="entry name" value="Spike_S2_CoV"/>
</dbReference>
<dbReference type="InterPro" id="IPR043614">
    <property type="entry name" value="Spike_S2_CoV_C"/>
</dbReference>
<dbReference type="InterPro" id="IPR044873">
    <property type="entry name" value="Spike_S2_CoV_HR1"/>
</dbReference>
<dbReference type="InterPro" id="IPR044874">
    <property type="entry name" value="Spike_S2_CoV_HR2"/>
</dbReference>
<dbReference type="Pfam" id="PF19209">
    <property type="entry name" value="CoV_S1_C"/>
    <property type="match status" value="1"/>
</dbReference>
<dbReference type="Pfam" id="PF01601">
    <property type="entry name" value="CoV_S2"/>
    <property type="match status" value="1"/>
</dbReference>
<dbReference type="Pfam" id="PF19214">
    <property type="entry name" value="CoV_S2_C"/>
    <property type="match status" value="1"/>
</dbReference>
<dbReference type="SUPFAM" id="SSF111474">
    <property type="entry name" value="Coronavirus S2 glycoprotein"/>
    <property type="match status" value="2"/>
</dbReference>
<dbReference type="PROSITE" id="PS51923">
    <property type="entry name" value="COV_S2_HR1"/>
    <property type="match status" value="1"/>
</dbReference>
<dbReference type="PROSITE" id="PS51924">
    <property type="entry name" value="COV_S2_HR2"/>
    <property type="match status" value="1"/>
</dbReference>
<feature type="signal peptide" evidence="1">
    <location>
        <begin position="1"/>
        <end position="18"/>
    </location>
</feature>
<feature type="chain" id="PRO_0000037165" description="Spike glycoprotein" evidence="1">
    <location>
        <begin position="19"/>
        <end position="1154"/>
    </location>
</feature>
<feature type="chain" id="PRO_0000037166" description="Spike protein S1" evidence="1">
    <location>
        <begin position="19"/>
        <end position="538"/>
    </location>
</feature>
<feature type="chain" id="PRO_0000037167" description="Spike protein S2" evidence="1">
    <location>
        <begin position="539"/>
        <end position="1154"/>
    </location>
</feature>
<feature type="chain" id="PRO_0000444093" description="Spike protein S2'" evidence="1">
    <location>
        <begin position="692"/>
        <end position="1154"/>
    </location>
</feature>
<feature type="topological domain" description="Extracellular" evidence="1">
    <location>
        <begin position="19"/>
        <end position="1096"/>
    </location>
</feature>
<feature type="transmembrane region" description="Helical" evidence="1">
    <location>
        <begin position="1097"/>
        <end position="1117"/>
    </location>
</feature>
<feature type="topological domain" description="Cytoplasmic" evidence="1">
    <location>
        <begin position="1118"/>
        <end position="1154"/>
    </location>
</feature>
<feature type="region of interest" description="Heptad repeat 1 (HR1)" evidence="2">
    <location>
        <begin position="770"/>
        <end position="875"/>
    </location>
</feature>
<feature type="region of interest" description="Heptad repeat 2 (HR2)" evidence="3">
    <location>
        <begin position="1025"/>
        <end position="1106"/>
    </location>
</feature>
<feature type="coiled-coil region" evidence="1">
    <location>
        <begin position="823"/>
        <end position="867"/>
    </location>
</feature>
<feature type="coiled-coil region" evidence="1">
    <location>
        <begin position="1056"/>
        <end position="1084"/>
    </location>
</feature>
<feature type="site" description="Cleavage; by host furin" evidence="1">
    <location>
        <begin position="538"/>
        <end position="539"/>
    </location>
</feature>
<feature type="site" description="Cleavage; by host furin" evidence="1">
    <location>
        <begin position="691"/>
        <end position="692"/>
    </location>
</feature>
<feature type="glycosylation site" description="N-linked (GlcNAc...) asparagine; by host" evidence="1">
    <location>
        <position position="23"/>
    </location>
</feature>
<feature type="glycosylation site" description="N-linked (GlcNAc...) asparagine; by host" evidence="1">
    <location>
        <position position="74"/>
    </location>
</feature>
<feature type="glycosylation site" description="N-linked (GlcNAc...) asparagine; by host" evidence="1">
    <location>
        <position position="102"/>
    </location>
</feature>
<feature type="glycosylation site" description="N-linked (GlcNAc...) asparagine; by host" evidence="1">
    <location>
        <position position="139"/>
    </location>
</feature>
<feature type="glycosylation site" description="N-linked (GlcNAc...) asparagine; by host" evidence="1">
    <location>
        <position position="145"/>
    </location>
</feature>
<feature type="glycosylation site" description="N-linked (GlcNAc...) asparagine; by host" evidence="1">
    <location>
        <position position="164"/>
    </location>
</feature>
<feature type="glycosylation site" description="N-linked (GlcNAc...) asparagine; by host" evidence="1">
    <location>
        <position position="179"/>
    </location>
</feature>
<feature type="glycosylation site" description="N-linked (GlcNAc...) asparagine; by host" evidence="1">
    <location>
        <position position="213"/>
    </location>
</feature>
<feature type="glycosylation site" description="N-linked (GlcNAc...) asparagine; by host" evidence="1">
    <location>
        <position position="238"/>
    </location>
</feature>
<feature type="glycosylation site" description="N-linked (GlcNAc...) asparagine; by host" evidence="1">
    <location>
        <position position="248"/>
    </location>
</feature>
<feature type="glycosylation site" description="N-linked (GlcNAc...) asparagine; by host" evidence="1">
    <location>
        <position position="265"/>
    </location>
</feature>
<feature type="glycosylation site" description="N-linked (GlcNAc...) asparagine; by host" evidence="1">
    <location>
        <position position="272"/>
    </location>
</feature>
<feature type="glycosylation site" description="N-linked (GlcNAc...) asparagine; by host" evidence="1">
    <location>
        <position position="277"/>
    </location>
</feature>
<feature type="glycosylation site" description="N-linked (GlcNAc...) asparagine; by host" evidence="1">
    <location>
        <position position="307"/>
    </location>
</feature>
<feature type="glycosylation site" description="N-linked (GlcNAc...) asparagine; by host" evidence="1">
    <location>
        <position position="426"/>
    </location>
</feature>
<feature type="glycosylation site" description="N-linked (GlcNAc...) asparagine; by host" evidence="1">
    <location>
        <position position="448"/>
    </location>
</feature>
<feature type="glycosylation site" description="N-linked (GlcNAc...) asparagine; by host" evidence="1">
    <location>
        <position position="514"/>
    </location>
</feature>
<feature type="glycosylation site" description="N-linked (GlcNAc...) asparagine; by host" evidence="1">
    <location>
        <position position="531"/>
    </location>
</feature>
<feature type="glycosylation site" description="N-linked (GlcNAc...) asparagine; by host" evidence="1">
    <location>
        <position position="543"/>
    </location>
</feature>
<feature type="glycosylation site" description="N-linked (GlcNAc...) asparagine; by host" evidence="1">
    <location>
        <position position="580"/>
    </location>
</feature>
<feature type="glycosylation site" description="N-linked (GlcNAc...) asparagine; by host" evidence="1">
    <location>
        <position position="592"/>
    </location>
</feature>
<feature type="glycosylation site" description="N-linked (GlcNAc...) asparagine; by host" evidence="1">
    <location>
        <position position="670"/>
    </location>
</feature>
<feature type="glycosylation site" description="N-linked (GlcNAc...) asparagine; by host" evidence="1">
    <location>
        <position position="677"/>
    </location>
</feature>
<feature type="glycosylation site" description="N-linked (GlcNAc...) asparagine; by host" evidence="1">
    <location>
        <position position="948"/>
    </location>
</feature>
<feature type="glycosylation site" description="N-linked (GlcNAc...) asparagine; by host" evidence="1">
    <location>
        <position position="961"/>
    </location>
</feature>
<feature type="glycosylation site" description="N-linked (GlcNAc...) asparagine; by host" evidence="1">
    <location>
        <position position="980"/>
    </location>
</feature>
<feature type="glycosylation site" description="N-linked (GlcNAc...) asparagine; by host" evidence="1">
    <location>
        <position position="1015"/>
    </location>
</feature>
<feature type="glycosylation site" description="N-linked (GlcNAc...) asparagine; by host" evidence="1">
    <location>
        <position position="1039"/>
    </location>
</feature>
<feature type="glycosylation site" description="N-linked (GlcNAc...) asparagine; by host" evidence="1">
    <location>
        <position position="1052"/>
    </location>
</feature>
<feature type="glycosylation site" description="N-linked (GlcNAc...) asparagine; by host" evidence="1">
    <location>
        <position position="1075"/>
    </location>
</feature>
<organismHost>
    <name type="scientific">Gallus gallus</name>
    <name type="common">Chicken</name>
    <dbReference type="NCBI Taxonomy" id="9031"/>
</organismHost>
<gene>
    <name evidence="1" type="primary">S</name>
    <name type="ORF">2</name>
</gene>
<comment type="function">
    <molecule>Spike protein S1</molecule>
    <text evidence="1">Attaches the virion to the host cell membrane by interacting with sialic acids, initiating the infection.</text>
</comment>
<comment type="function">
    <molecule>Spike protein S2</molecule>
    <text evidence="1">Mediates fusion of the virion and cellular membranes by acting as a class I viral fusion protein. Under the current model, the protein has at least 3 conformational states: pre-fusion native state, pre-hairpin intermediate state, and post-fusion hairpin state. During viral and target cell membrane fusion, the coiled coil regions (heptad repeats) assume a trimer-of-hairpins structure, positioning the fusion peptide in close proximity to the C-terminal region of the ectodomain. The formation of this structure appears to drive apposition and subsequent fusion of viral and target cell membranes.</text>
</comment>
<comment type="function">
    <molecule>Spike protein S2'</molecule>
    <text evidence="1">Acts as a viral fusion peptide after S2 cleavage occurring upon virus endocytosis.</text>
</comment>
<comment type="subunit">
    <text evidence="1">Homotrimer; each monomer consists of a S1 and a S2 subunit. The resulting peplomers protrude from the virus surface as spikes.</text>
</comment>
<comment type="subcellular location">
    <molecule>Spike protein S2</molecule>
    <subcellularLocation>
        <location evidence="1">Virion membrane</location>
        <topology evidence="1">Single-pass type I membrane protein</topology>
    </subcellularLocation>
    <subcellularLocation>
        <location evidence="1">Host endoplasmic reticulum-Golgi intermediate compartment membrane</location>
        <topology evidence="1">Single-pass type I membrane protein</topology>
    </subcellularLocation>
    <text evidence="1">Accumulates in the endoplasmic reticulum-Golgi intermediate compartment, where it participates in virus particle assembly. Some S oligomers may be transported to the plasma membrane, where they may mediate cell-cell fusion.</text>
</comment>
<comment type="subcellular location">
    <molecule>Spike protein S1</molecule>
    <subcellularLocation>
        <location evidence="1">Virion membrane</location>
        <topology evidence="1">Peripheral membrane protein</topology>
    </subcellularLocation>
    <subcellularLocation>
        <location evidence="1">Host endoplasmic reticulum-Golgi intermediate compartment membrane</location>
        <topology evidence="1">Peripheral membrane protein</topology>
    </subcellularLocation>
    <text evidence="1">Accumulates in the endoplasmic reticulum-Golgi intermediate compartment, where it participates in virus particle assembly. Some S oligomers may be transported to the plasma membrane, where they may mediate cell-cell fusion. S1 is not anchored to the viral envelope, but associates with the extravirion surface through its binding to S2.</text>
</comment>
<comment type="PTM">
    <text evidence="1">Specific enzymatic cleavages in vivo yield mature proteins. The precursor is processed into S1 and S2 by host cell furin or furin-like protease to yield the mature S1 and S2 proteins. The cleavage site between S1 and S2 requires the optimal sequence [KR]-X-[KR]-R. Additionally, a second cleavage leads to the release of a fusion peptide after viral attachment to host cell receptor.</text>
</comment>
<comment type="similarity">
    <text evidence="1">Belongs to the gammacoronaviruses spike protein family.</text>
</comment>
<keyword id="KW-0165">Cleavage on pair of basic residues</keyword>
<keyword id="KW-0175">Coiled coil</keyword>
<keyword id="KW-1170">Fusion of virus membrane with host endosomal membrane</keyword>
<keyword id="KW-1168">Fusion of virus membrane with host membrane</keyword>
<keyword id="KW-0325">Glycoprotein</keyword>
<keyword id="KW-1043">Host membrane</keyword>
<keyword id="KW-0945">Host-virus interaction</keyword>
<keyword id="KW-0472">Membrane</keyword>
<keyword id="KW-0732">Signal</keyword>
<keyword id="KW-0812">Transmembrane</keyword>
<keyword id="KW-1133">Transmembrane helix</keyword>
<keyword id="KW-1161">Viral attachment to host cell</keyword>
<keyword id="KW-0261">Viral envelope protein</keyword>
<keyword id="KW-1162">Viral penetration into host cytoplasm</keyword>
<keyword id="KW-0946">Virion</keyword>
<keyword id="KW-0843">Virulence</keyword>
<keyword id="KW-1164">Virus endocytosis by host</keyword>
<keyword id="KW-1160">Virus entry into host cell</keyword>
<reference key="1">
    <citation type="journal article" date="1989" name="Nucleic Acids Res.">
        <title>Nucleotide sequence of the gene coding for the peplomer protein (= spike protein) of infectious bronchitis virus, strain D274.</title>
        <authorList>
            <person name="Jordi B.J.A.M."/>
            <person name="Kremers D.A.W.M."/>
            <person name="Kusters H.G."/>
            <person name="van der Zeijst B.A.M."/>
        </authorList>
    </citation>
    <scope>NUCLEOTIDE SEQUENCE [GENOMIC RNA]</scope>
</reference>
<accession>P12722</accession>
<accession>Q66176</accession>
<accession>Q66177</accession>
<name>SPIKE_IBVD2</name>
<evidence type="ECO:0000255" key="1">
    <source>
        <dbReference type="HAMAP-Rule" id="MF_04098"/>
    </source>
</evidence>
<evidence type="ECO:0000255" key="2">
    <source>
        <dbReference type="PROSITE-ProRule" id="PRU01271"/>
    </source>
</evidence>
<evidence type="ECO:0000255" key="3">
    <source>
        <dbReference type="PROSITE-ProRule" id="PRU01272"/>
    </source>
</evidence>
<sequence length="1154" mass="127503">MLERSLLLATLLSALCSANLFGNNSYVYYYQSAFRPPDGWHLHGGAYEVVNVFTESSNAGTTGCTVGAIYWSKNFSAASVAMTAPQNGMSWSTEQFCTAHCNFTDFVVFVTHCYKSSHGSCPLTGLIPQNHIRISAMKNSSLFYNLTVAVTKYPRFKSLQCVNNMTSVYLNGDLVFTSNETKDVSAAGVHFKAGGPITYKVMREVKALAYFVNGTAQDVILCDGSPTGLLACQYNTGNFSDGFYPFTNSSLVKEKFIVYRESSVNTTLELTNFTFSNVSNATPNTGGVQTIQLYQTSTAQSGYYNLNFSFLSSFIYKASDYMYGSYHPSCKFRLETINNGLWFNSLSVSLGYGPIQGGCKQSVFANRATCCYAYSYNGPSLCKGVYRGELTKSFECGLLVFVTKTDGSRIQTRNEPFTLTQHNYNNITLDRCVEYNIYGRVGQGFITNVTNYAINYNYLADGGMAILDTSGAIDIFVVQGEYGLNYYKVNPCEDVNQQFVVSGGKLVGILTSRNETGSQPLENQFYIKIINGTRRSRRSITGNVTNCPYVTYGKFCIKPDGSISTIVPKELEHFVAPLLNVTENVLIPDSFNLTVTDEYIQTRMDKVQINCLQYVCGNSLECRKLFQQYGPVCDNILSVVNSVGQKEDMELLHFYSSTKPSGFNTPVLSNVSTGEFNISLLLTPPSSASGRSFIEDLLFTSVESVGLPTDDAYKKCTAGPLGFLKDLACAREYNGLLVLPPIITAEMQTLYTSSLVASMAFGGITSVGAIPFATQLQARINHLGITQSLLLKNQEKIAASFNKAIGHMQEGFRSTSLALQQIQDVVNKQSSILTETMASLNKNFGAISSVLQDIYQQLDSIQADAQVDRIITGRLSSLSVLASAKQAEYYRVSQQRELATQKINECVKSQSIRYSFCGNGRHVLTIPQNAPNGIVFIHFTYTPESFVNVTAIVGFCVNPANASQYAIVPANGRGIFIQVNGSYYITARDMYMPRDITAGDIVTLTSCQANYVSVNKTVITTFVDNDDFDFDDELSKWWNDTKHELPDFDEFNYTVPILDIGSEIDRIQGVIQGLNDSLIDLETLSILKTYIKWPWYVWLAIAFATIIFILILGWLFFMTGCCGCCCGCFGIIPLMSKCGKKSSYYTTFDNDVVT</sequence>
<proteinExistence type="inferred from homology"/>
<organism>
    <name type="scientific">Avian infectious bronchitis virus (strain D274)</name>
    <name type="common">IBV</name>
    <dbReference type="NCBI Taxonomy" id="11124"/>
    <lineage>
        <taxon>Viruses</taxon>
        <taxon>Riboviria</taxon>
        <taxon>Orthornavirae</taxon>
        <taxon>Pisuviricota</taxon>
        <taxon>Pisoniviricetes</taxon>
        <taxon>Nidovirales</taxon>
        <taxon>Cornidovirineae</taxon>
        <taxon>Coronaviridae</taxon>
        <taxon>Orthocoronavirinae</taxon>
        <taxon>Gammacoronavirus</taxon>
        <taxon>Igacovirus</taxon>
        <taxon>Avian coronavirus</taxon>
    </lineage>
</organism>
<protein>
    <recommendedName>
        <fullName evidence="1">Spike glycoprotein</fullName>
        <shortName evidence="1">S glycoprotein</shortName>
    </recommendedName>
    <alternativeName>
        <fullName evidence="1">E2</fullName>
    </alternativeName>
    <alternativeName>
        <fullName evidence="1">Peplomer protein</fullName>
    </alternativeName>
    <component>
        <recommendedName>
            <fullName evidence="1">Spike protein S1</fullName>
        </recommendedName>
    </component>
    <component>
        <recommendedName>
            <fullName evidence="1">Spike protein S2</fullName>
        </recommendedName>
    </component>
    <component>
        <recommendedName>
            <fullName evidence="1">Spike protein S2'</fullName>
        </recommendedName>
    </component>
</protein>